<evidence type="ECO:0000250" key="1">
    <source>
        <dbReference type="UniProtKB" id="P26232"/>
    </source>
</evidence>
<evidence type="ECO:0000250" key="2">
    <source>
        <dbReference type="UniProtKB" id="P30997"/>
    </source>
</evidence>
<evidence type="ECO:0000250" key="3">
    <source>
        <dbReference type="UniProtKB" id="Q61301"/>
    </source>
</evidence>
<evidence type="ECO:0000256" key="4">
    <source>
        <dbReference type="SAM" id="MobiDB-lite"/>
    </source>
</evidence>
<evidence type="ECO:0000305" key="5"/>
<reference key="1">
    <citation type="submission" date="2004-06" db="EMBL/GenBank/DDBJ databases">
        <authorList>
            <consortium name="NIH - Xenopus Gene Collection (XGC) project"/>
        </authorList>
    </citation>
    <scope>NUCLEOTIDE SEQUENCE [LARGE SCALE MRNA]</scope>
    <source>
        <tissue>Eye</tissue>
    </source>
</reference>
<accession>Q6GLP0</accession>
<proteinExistence type="evidence at transcript level"/>
<gene>
    <name type="primary">ctnna2</name>
</gene>
<feature type="chain" id="PRO_0000383570" description="Catenin alpha-2">
    <location>
        <begin position="1"/>
        <end position="966"/>
    </location>
</feature>
<feature type="region of interest" description="Disordered" evidence="4">
    <location>
        <begin position="924"/>
        <end position="952"/>
    </location>
</feature>
<feature type="compositionally biased region" description="Basic and acidic residues" evidence="4">
    <location>
        <begin position="924"/>
        <end position="940"/>
    </location>
</feature>
<feature type="compositionally biased region" description="Basic residues" evidence="4">
    <location>
        <begin position="941"/>
        <end position="951"/>
    </location>
</feature>
<dbReference type="EMBL" id="BC074420">
    <property type="protein sequence ID" value="AAH74420.1"/>
    <property type="molecule type" value="mRNA"/>
</dbReference>
<dbReference type="RefSeq" id="NP_001086281.1">
    <property type="nucleotide sequence ID" value="NM_001092812.1"/>
</dbReference>
<dbReference type="SMR" id="Q6GLP0"/>
<dbReference type="DNASU" id="444710"/>
<dbReference type="GeneID" id="444710"/>
<dbReference type="KEGG" id="xla:444710"/>
<dbReference type="AGR" id="Xenbase:XB-GENE-5955229"/>
<dbReference type="CTD" id="444710"/>
<dbReference type="Xenbase" id="XB-GENE-5955229">
    <property type="gene designation" value="ctnna2.L"/>
</dbReference>
<dbReference type="OrthoDB" id="6376697at2759"/>
<dbReference type="Proteomes" id="UP000186698">
    <property type="component" value="Chromosome 1L"/>
</dbReference>
<dbReference type="Bgee" id="444710">
    <property type="expression patterns" value="Expressed in brain and 2 other cell types or tissues"/>
</dbReference>
<dbReference type="GO" id="GO:0015629">
    <property type="term" value="C:actin cytoskeleton"/>
    <property type="evidence" value="ECO:0007669"/>
    <property type="project" value="InterPro"/>
</dbReference>
<dbReference type="GO" id="GO:0005912">
    <property type="term" value="C:adherens junction"/>
    <property type="evidence" value="ECO:0000250"/>
    <property type="project" value="UniProtKB"/>
</dbReference>
<dbReference type="GO" id="GO:0030424">
    <property type="term" value="C:axon"/>
    <property type="evidence" value="ECO:0000250"/>
    <property type="project" value="UniProtKB"/>
</dbReference>
<dbReference type="GO" id="GO:0016342">
    <property type="term" value="C:catenin complex"/>
    <property type="evidence" value="ECO:0000318"/>
    <property type="project" value="GO_Central"/>
</dbReference>
<dbReference type="GO" id="GO:0005737">
    <property type="term" value="C:cytoplasm"/>
    <property type="evidence" value="ECO:0000250"/>
    <property type="project" value="UniProtKB"/>
</dbReference>
<dbReference type="GO" id="GO:0005634">
    <property type="term" value="C:nucleus"/>
    <property type="evidence" value="ECO:0007669"/>
    <property type="project" value="UniProtKB-SubCell"/>
</dbReference>
<dbReference type="GO" id="GO:0051015">
    <property type="term" value="F:actin filament binding"/>
    <property type="evidence" value="ECO:0000318"/>
    <property type="project" value="GO_Central"/>
</dbReference>
<dbReference type="GO" id="GO:0008013">
    <property type="term" value="F:beta-catenin binding"/>
    <property type="evidence" value="ECO:0000318"/>
    <property type="project" value="GO_Central"/>
</dbReference>
<dbReference type="GO" id="GO:0045296">
    <property type="term" value="F:cadherin binding"/>
    <property type="evidence" value="ECO:0007669"/>
    <property type="project" value="InterPro"/>
</dbReference>
<dbReference type="GO" id="GO:0005198">
    <property type="term" value="F:structural molecule activity"/>
    <property type="evidence" value="ECO:0007669"/>
    <property type="project" value="InterPro"/>
</dbReference>
<dbReference type="GO" id="GO:0007409">
    <property type="term" value="P:axonogenesis"/>
    <property type="evidence" value="ECO:0000250"/>
    <property type="project" value="UniProtKB"/>
</dbReference>
<dbReference type="GO" id="GO:0048854">
    <property type="term" value="P:brain morphogenesis"/>
    <property type="evidence" value="ECO:0000250"/>
    <property type="project" value="UniProtKB"/>
</dbReference>
<dbReference type="GO" id="GO:0016477">
    <property type="term" value="P:cell migration"/>
    <property type="evidence" value="ECO:0000318"/>
    <property type="project" value="GO_Central"/>
</dbReference>
<dbReference type="GO" id="GO:0098609">
    <property type="term" value="P:cell-cell adhesion"/>
    <property type="evidence" value="ECO:0000250"/>
    <property type="project" value="UniProtKB"/>
</dbReference>
<dbReference type="GO" id="GO:0048813">
    <property type="term" value="P:dendrite morphogenesis"/>
    <property type="evidence" value="ECO:0000250"/>
    <property type="project" value="UniProtKB"/>
</dbReference>
<dbReference type="GO" id="GO:0051823">
    <property type="term" value="P:regulation of synapse structural plasticity"/>
    <property type="evidence" value="ECO:0000250"/>
    <property type="project" value="UniProtKB"/>
</dbReference>
<dbReference type="FunFam" id="1.20.120.230:FF:000006">
    <property type="entry name" value="Catenin alpha 1"/>
    <property type="match status" value="1"/>
</dbReference>
<dbReference type="FunFam" id="1.20.120.230:FF:000007">
    <property type="entry name" value="Catenin alpha 1"/>
    <property type="match status" value="1"/>
</dbReference>
<dbReference type="FunFam" id="1.20.120.230:FF:000008">
    <property type="entry name" value="Catenin alpha 1"/>
    <property type="match status" value="1"/>
</dbReference>
<dbReference type="FunFam" id="1.20.120.230:FF:000011">
    <property type="entry name" value="Catenin alpha 1"/>
    <property type="match status" value="1"/>
</dbReference>
<dbReference type="Gene3D" id="6.10.250.2510">
    <property type="match status" value="1"/>
</dbReference>
<dbReference type="Gene3D" id="1.20.120.230">
    <property type="entry name" value="Alpha-catenin/vinculin-like"/>
    <property type="match status" value="5"/>
</dbReference>
<dbReference type="InterPro" id="IPR036723">
    <property type="entry name" value="Alpha-catenin/vinculin-like_sf"/>
</dbReference>
<dbReference type="InterPro" id="IPR001033">
    <property type="entry name" value="Alpha_catenin"/>
</dbReference>
<dbReference type="InterPro" id="IPR006077">
    <property type="entry name" value="Vinculin/catenin"/>
</dbReference>
<dbReference type="InterPro" id="IPR000633">
    <property type="entry name" value="Vinculin_CS"/>
</dbReference>
<dbReference type="PANTHER" id="PTHR18914">
    <property type="entry name" value="ALPHA CATENIN"/>
    <property type="match status" value="1"/>
</dbReference>
<dbReference type="PANTHER" id="PTHR18914:SF23">
    <property type="entry name" value="CATENIN ALPHA-2"/>
    <property type="match status" value="1"/>
</dbReference>
<dbReference type="Pfam" id="PF01044">
    <property type="entry name" value="Vinculin"/>
    <property type="match status" value="2"/>
</dbReference>
<dbReference type="PRINTS" id="PR00805">
    <property type="entry name" value="ALPHACATENIN"/>
</dbReference>
<dbReference type="SUPFAM" id="SSF47220">
    <property type="entry name" value="alpha-catenin/vinculin-like"/>
    <property type="match status" value="4"/>
</dbReference>
<dbReference type="PROSITE" id="PS00663">
    <property type="entry name" value="VINCULIN_1"/>
    <property type="match status" value="1"/>
</dbReference>
<organism>
    <name type="scientific">Xenopus laevis</name>
    <name type="common">African clawed frog</name>
    <dbReference type="NCBI Taxonomy" id="8355"/>
    <lineage>
        <taxon>Eukaryota</taxon>
        <taxon>Metazoa</taxon>
        <taxon>Chordata</taxon>
        <taxon>Craniata</taxon>
        <taxon>Vertebrata</taxon>
        <taxon>Euteleostomi</taxon>
        <taxon>Amphibia</taxon>
        <taxon>Batrachia</taxon>
        <taxon>Anura</taxon>
        <taxon>Pipoidea</taxon>
        <taxon>Pipidae</taxon>
        <taxon>Xenopodinae</taxon>
        <taxon>Xenopus</taxon>
        <taxon>Xenopus</taxon>
    </lineage>
</organism>
<keyword id="KW-0130">Cell adhesion</keyword>
<keyword id="KW-0965">Cell junction</keyword>
<keyword id="KW-1003">Cell membrane</keyword>
<keyword id="KW-0966">Cell projection</keyword>
<keyword id="KW-0963">Cytoplasm</keyword>
<keyword id="KW-0206">Cytoskeleton</keyword>
<keyword id="KW-0217">Developmental protein</keyword>
<keyword id="KW-0221">Differentiation</keyword>
<keyword id="KW-0472">Membrane</keyword>
<keyword id="KW-0539">Nucleus</keyword>
<keyword id="KW-1185">Reference proteome</keyword>
<protein>
    <recommendedName>
        <fullName>Catenin alpha-2</fullName>
    </recommendedName>
    <alternativeName>
        <fullName>Alpha N-catenin</fullName>
    </alternativeName>
</protein>
<name>CTNA2_XENLA</name>
<sequence>MSSATSPIILKWDPKSLEIRTLTVESLLEPLVTQVTTLVNTSNKGPSGKKKGRSKKAHVLAASVEQATQNFLEKGEQIAKESQDLKDELISAVEDVRKQGETMRIASSEFADDPCSSVKRGTMVRAARALLSAVTRLLILADMADVMRLLTHLKIVEEALEMVKNATNEQDLAHRFKEFGKEMVKLNYVAARRQQELKDPHCRDEMAAARGALKKNATMLYTASQAFLRHSDVAATRANRDYVFKQVQEAIAGISNAAQATSPTDEKQAHTGIGELAAALNEFDNKIILDPLTFSEARFRPSLEERLESIISGAALMADSSCTRDDRRERIVAECNSVRQALQDLLSEYMNNCRYGTWMDESSKSGRKEKGDPLNIAIDKMTKKTRDLRRQLRKAVMDHISDSFLETNVPLLVLIEAAKSGNEKEVKEYAQVFREHANKLVEVANLACSISNNEEGVKLVRMAATQIDSLCPQVINAALTLAARPQSKVAQDNMDVFKDQWEKQVRVLTEAVDDITSVDDFLSVSENHILEDVNKCVIALQEGDVDTLDRTAGAIRGRAARVIHIINAEMENYEAGVYTEKVLETTKLLSETVMPRFAEQVEVAIEALSTNIPQPFEENEFIDASRLVYDGVRDIRKAVLMIRTPEELEDDSDFEQEDYDVRSRTSVQTEDDQLIAGQSARAIMAQLPQEEKAKIAEQVEIFHQEKSKLDAEVAKWDDSGNDIIVLAKQMCMIMMEMTDFTRGKGPLKNTSDVINAAKKIAEAGSRMDKLARAVADQCPDSACKQDLLAYLQRIALYCHQLNICSKVKAEVQNLGGELIVSGTGVQSTFTTFYEVAGDVIAGGRDSQLSLDLLPSCTEGSLFGSGSRDSTMLDSATSLIQAAKNLMNAVVLTVKASYVASTKYQKVYGTAAVNSPVVSWKMKAPEKKPLVKREKPEEYQTRVRRGSQKKHISPVQALSEFKAMDSF</sequence>
<comment type="function">
    <text evidence="2">May function as a linker between cadherin adhesion receptors and the cytoskeleton to regulate cell-cell adhesion and differentiation in the nervous system.</text>
</comment>
<comment type="subcellular location">
    <subcellularLocation>
        <location evidence="3">Cell membrane</location>
        <topology evidence="3">Peripheral membrane protein</topology>
        <orientation evidence="3">Cytoplasmic side</orientation>
    </subcellularLocation>
    <subcellularLocation>
        <location evidence="3">Cytoplasm</location>
    </subcellularLocation>
    <subcellularLocation>
        <location evidence="3">Cytoplasm</location>
        <location evidence="3">Cytoskeleton</location>
    </subcellularLocation>
    <subcellularLocation>
        <location evidence="3">Cell junction</location>
        <location evidence="3">Adherens junction</location>
    </subcellularLocation>
    <subcellularLocation>
        <location evidence="3">Cell projection</location>
        <location evidence="3">Axon</location>
    </subcellularLocation>
    <subcellularLocation>
        <location evidence="1">Nucleus</location>
    </subcellularLocation>
</comment>
<comment type="similarity">
    <text evidence="5">Belongs to the vinculin/alpha-catenin family.</text>
</comment>